<gene>
    <name evidence="4" type="primary">TAF11L11</name>
</gene>
<evidence type="ECO:0000256" key="1">
    <source>
        <dbReference type="SAM" id="MobiDB-lite"/>
    </source>
</evidence>
<evidence type="ECO:0000269" key="2">
    <source>
    </source>
</evidence>
<evidence type="ECO:0000305" key="3"/>
<evidence type="ECO:0000312" key="4">
    <source>
        <dbReference type="HGNC" id="HGNC:53854"/>
    </source>
</evidence>
<proteinExistence type="evidence at protein level"/>
<comment type="tissue specificity">
    <text evidence="2">Expressed in fetal brain and testis.</text>
</comment>
<comment type="similarity">
    <text evidence="3">Belongs to the TAF11 family.</text>
</comment>
<name>TFKLK_HUMAN</name>
<organism>
    <name type="scientific">Homo sapiens</name>
    <name type="common">Human</name>
    <dbReference type="NCBI Taxonomy" id="9606"/>
    <lineage>
        <taxon>Eukaryota</taxon>
        <taxon>Metazoa</taxon>
        <taxon>Chordata</taxon>
        <taxon>Craniata</taxon>
        <taxon>Vertebrata</taxon>
        <taxon>Euteleostomi</taxon>
        <taxon>Mammalia</taxon>
        <taxon>Eutheria</taxon>
        <taxon>Euarchontoglires</taxon>
        <taxon>Primates</taxon>
        <taxon>Haplorrhini</taxon>
        <taxon>Catarrhini</taxon>
        <taxon>Hominidae</taxon>
        <taxon>Homo</taxon>
    </lineage>
</organism>
<reference key="1">
    <citation type="journal article" date="2004" name="Nature">
        <title>The DNA sequence and comparative analysis of human chromosome 5.</title>
        <authorList>
            <person name="Schmutz J."/>
            <person name="Martin J."/>
            <person name="Terry A."/>
            <person name="Couronne O."/>
            <person name="Grimwood J."/>
            <person name="Lowry S."/>
            <person name="Gordon L.A."/>
            <person name="Scott D."/>
            <person name="Xie G."/>
            <person name="Huang W."/>
            <person name="Hellsten U."/>
            <person name="Tran-Gyamfi M."/>
            <person name="She X."/>
            <person name="Prabhakar S."/>
            <person name="Aerts A."/>
            <person name="Altherr M."/>
            <person name="Bajorek E."/>
            <person name="Black S."/>
            <person name="Branscomb E."/>
            <person name="Caoile C."/>
            <person name="Challacombe J.F."/>
            <person name="Chan Y.M."/>
            <person name="Denys M."/>
            <person name="Detter J.C."/>
            <person name="Escobar J."/>
            <person name="Flowers D."/>
            <person name="Fotopulos D."/>
            <person name="Glavina T."/>
            <person name="Gomez M."/>
            <person name="Gonzales E."/>
            <person name="Goodstein D."/>
            <person name="Grigoriev I."/>
            <person name="Groza M."/>
            <person name="Hammon N."/>
            <person name="Hawkins T."/>
            <person name="Haydu L."/>
            <person name="Israni S."/>
            <person name="Jett J."/>
            <person name="Kadner K."/>
            <person name="Kimball H."/>
            <person name="Kobayashi A."/>
            <person name="Lopez F."/>
            <person name="Lou Y."/>
            <person name="Martinez D."/>
            <person name="Medina C."/>
            <person name="Morgan J."/>
            <person name="Nandkeshwar R."/>
            <person name="Noonan J.P."/>
            <person name="Pitluck S."/>
            <person name="Pollard M."/>
            <person name="Predki P."/>
            <person name="Priest J."/>
            <person name="Ramirez L."/>
            <person name="Retterer J."/>
            <person name="Rodriguez A."/>
            <person name="Rogers S."/>
            <person name="Salamov A."/>
            <person name="Salazar A."/>
            <person name="Thayer N."/>
            <person name="Tice H."/>
            <person name="Tsai M."/>
            <person name="Ustaszewska A."/>
            <person name="Vo N."/>
            <person name="Wheeler J."/>
            <person name="Wu K."/>
            <person name="Yang J."/>
            <person name="Dickson M."/>
            <person name="Cheng J.-F."/>
            <person name="Eichler E.E."/>
            <person name="Olsen A."/>
            <person name="Pennacchio L.A."/>
            <person name="Rokhsar D.S."/>
            <person name="Richardson P."/>
            <person name="Lucas S.M."/>
            <person name="Myers R.M."/>
            <person name="Rubin E.M."/>
        </authorList>
    </citation>
    <scope>NUCLEOTIDE SEQUENCE [LARGE SCALE GENOMIC DNA]</scope>
</reference>
<reference key="2">
    <citation type="journal article" date="2010" name="BMC Genomics">
        <title>Expression, tandem repeat copy number variation and stability of four macrosatellite arrays in the human genome.</title>
        <authorList>
            <person name="Tremblay D.C."/>
            <person name="Alexander G. Jr."/>
            <person name="Moseley S."/>
            <person name="Chadwick B.P."/>
        </authorList>
    </citation>
    <scope>TISSUE SPECIFICITY</scope>
</reference>
<protein>
    <recommendedName>
        <fullName evidence="3">TATA-box-binding protein-associated factor 11-like protein 11</fullName>
    </recommendedName>
</protein>
<keyword id="KW-1267">Proteomics identification</keyword>
<keyword id="KW-1185">Reference proteome</keyword>
<sequence>METGRQRDASAEMFPMPRGLKYSNKDGIPEDLDGNLEEPRDQESELRSQDVMDLTEGDNEASASTPPSAKRQKTDTKGKKERKPTMDAEEAQRMTTLFSAMSEEQLSRYEVCRRSAFPKARIAALMQSITGRSVSENTAIAMAGIAKVFVGEVVEEALDVCEMWGETPPLQPKHLREAVRRLKPKGILPNSNYKKIMF</sequence>
<dbReference type="EMBL" id="AC233724">
    <property type="status" value="NOT_ANNOTATED_CDS"/>
    <property type="molecule type" value="Genomic_DNA"/>
</dbReference>
<dbReference type="CCDS" id="CCDS93697.1"/>
<dbReference type="RefSeq" id="NP_001388619.1">
    <property type="nucleotide sequence ID" value="NM_001401690.2"/>
</dbReference>
<dbReference type="RefSeq" id="NP_001410463.1">
    <property type="nucleotide sequence ID" value="NM_001423534.1"/>
</dbReference>
<dbReference type="SMR" id="A0A1W2PQ09"/>
<dbReference type="FunCoup" id="A0A1W2PQ09">
    <property type="interactions" value="24"/>
</dbReference>
<dbReference type="STRING" id="9606.ENSP00000491846"/>
<dbReference type="BioMuta" id="ENSG00000283740"/>
<dbReference type="MassIVE" id="A0A1W2PQ09"/>
<dbReference type="PeptideAtlas" id="A0A1W2PQ09"/>
<dbReference type="Ensembl" id="ENST00000510838.2">
    <property type="protein sequence ID" value="ENSP00000491846.1"/>
    <property type="gene ID" value="ENSG00000283740.2"/>
</dbReference>
<dbReference type="Ensembl" id="ENST00000707170.2">
    <property type="protein sequence ID" value="ENSP00000516772.1"/>
    <property type="gene ID" value="ENSG00000283740.2"/>
</dbReference>
<dbReference type="GeneID" id="112488746"/>
<dbReference type="MANE-Select" id="ENST00000707170.2">
    <property type="protein sequence ID" value="ENSP00000516772.1"/>
    <property type="RefSeq nucleotide sequence ID" value="NM_001423534.1"/>
    <property type="RefSeq protein sequence ID" value="NP_001410463.1"/>
</dbReference>
<dbReference type="AGR" id="HGNC:53854"/>
<dbReference type="GeneCards" id="TAF11L11"/>
<dbReference type="HGNC" id="HGNC:53854">
    <property type="gene designation" value="TAF11L11"/>
</dbReference>
<dbReference type="HPA" id="ENSG00000283740">
    <property type="expression patterns" value="Not detected"/>
</dbReference>
<dbReference type="VEuPathDB" id="HostDB:ENSG00000283740"/>
<dbReference type="GeneTree" id="ENSGT00390000013228"/>
<dbReference type="InParanoid" id="A0A1W2PQ09"/>
<dbReference type="OMA" id="EMFPMPR"/>
<dbReference type="PAN-GO" id="A0A1W2PQ09">
    <property type="GO annotations" value="3 GO annotations based on evolutionary models"/>
</dbReference>
<dbReference type="PRO" id="PR:A0A1W2PQ09"/>
<dbReference type="Proteomes" id="UP000005640">
    <property type="component" value="Chromosome 5"/>
</dbReference>
<dbReference type="RNAct" id="A0A1W2PQ09">
    <property type="molecule type" value="protein"/>
</dbReference>
<dbReference type="Bgee" id="ENSG00000283740">
    <property type="expression patterns" value="Expressed in primordial germ cell in gonad and 8 other cell types or tissues"/>
</dbReference>
<dbReference type="GO" id="GO:0005669">
    <property type="term" value="C:transcription factor TFIID complex"/>
    <property type="evidence" value="ECO:0000318"/>
    <property type="project" value="GO_Central"/>
</dbReference>
<dbReference type="GO" id="GO:0046982">
    <property type="term" value="F:protein heterodimerization activity"/>
    <property type="evidence" value="ECO:0007669"/>
    <property type="project" value="InterPro"/>
</dbReference>
<dbReference type="GO" id="GO:0051123">
    <property type="term" value="P:RNA polymerase II preinitiation complex assembly"/>
    <property type="evidence" value="ECO:0000318"/>
    <property type="project" value="GO_Central"/>
</dbReference>
<dbReference type="CDD" id="cd08048">
    <property type="entry name" value="HFD_TAF11"/>
    <property type="match status" value="1"/>
</dbReference>
<dbReference type="FunFam" id="1.10.20.10:FF:000025">
    <property type="entry name" value="Transcription initiation factor TFIID subunit 11"/>
    <property type="match status" value="1"/>
</dbReference>
<dbReference type="Gene3D" id="1.10.20.10">
    <property type="entry name" value="Histone, subunit A"/>
    <property type="match status" value="1"/>
</dbReference>
<dbReference type="InterPro" id="IPR009072">
    <property type="entry name" value="Histone-fold"/>
</dbReference>
<dbReference type="InterPro" id="IPR045127">
    <property type="entry name" value="TAF11-like"/>
</dbReference>
<dbReference type="InterPro" id="IPR006809">
    <property type="entry name" value="TAFII28_dom"/>
</dbReference>
<dbReference type="PANTHER" id="PTHR13218:SF15">
    <property type="entry name" value="TATA-BOX BINDING PROTEIN ASSOCIATED FACTOR 11 LIKE PROTEIN 2-RELATED"/>
    <property type="match status" value="1"/>
</dbReference>
<dbReference type="PANTHER" id="PTHR13218">
    <property type="entry name" value="TRANSCRIPTION INITIATION FACTOR TFIID SUBUNIT 11-RELATED"/>
    <property type="match status" value="1"/>
</dbReference>
<dbReference type="Pfam" id="PF04719">
    <property type="entry name" value="TAFII28"/>
    <property type="match status" value="1"/>
</dbReference>
<dbReference type="SUPFAM" id="SSF47113">
    <property type="entry name" value="Histone-fold"/>
    <property type="match status" value="1"/>
</dbReference>
<feature type="chain" id="PRO_0000456151" description="TATA-box-binding protein-associated factor 11-like protein 11">
    <location>
        <begin position="1"/>
        <end position="198"/>
    </location>
</feature>
<feature type="region of interest" description="Disordered" evidence="1">
    <location>
        <begin position="1"/>
        <end position="90"/>
    </location>
</feature>
<feature type="compositionally biased region" description="Basic and acidic residues" evidence="1">
    <location>
        <begin position="1"/>
        <end position="10"/>
    </location>
</feature>
<feature type="compositionally biased region" description="Basic and acidic residues" evidence="1">
    <location>
        <begin position="37"/>
        <end position="50"/>
    </location>
</feature>
<feature type="compositionally biased region" description="Basic and acidic residues" evidence="1">
    <location>
        <begin position="72"/>
        <end position="90"/>
    </location>
</feature>
<accession>A0A1W2PQ09</accession>